<accession>P39461</accession>
<gene>
    <name evidence="1 4" type="primary">fumC</name>
    <name type="ordered locus">SSO1077</name>
</gene>
<evidence type="ECO:0000255" key="1">
    <source>
        <dbReference type="HAMAP-Rule" id="MF_00743"/>
    </source>
</evidence>
<evidence type="ECO:0000269" key="2">
    <source>
    </source>
</evidence>
<evidence type="ECO:0000269" key="3">
    <source>
    </source>
</evidence>
<evidence type="ECO:0000303" key="4">
    <source>
    </source>
</evidence>
<evidence type="ECO:0000305" key="5"/>
<reference key="1">
    <citation type="journal article" date="1994" name="FEBS Lett.">
        <title>Molecular cloning, nucleotide sequence and expression of a Sulfolobus solfataricus gene encoding a class II fumarase.</title>
        <authorList>
            <person name="Colombo S."/>
            <person name="Grisa M."/>
            <person name="Tortora P."/>
            <person name="Vanoni M."/>
        </authorList>
    </citation>
    <scope>NUCLEOTIDE SEQUENCE [GENOMIC DNA]</scope>
    <scope>PROTEIN SEQUENCE OF 1-14</scope>
    <scope>FUNCTION</scope>
    <scope>BIOPHYSICOCHEMICAL PROPERTIES</scope>
    <source>
        <strain>DSM 5833 / MT-4</strain>
    </source>
</reference>
<reference key="2">
    <citation type="journal article" date="1994" name="FEBS Lett.">
        <authorList>
            <person name="Colombo S."/>
            <person name="Grisa M."/>
            <person name="Tortora P."/>
            <person name="Vanoni M."/>
        </authorList>
    </citation>
    <scope>ERRATUM OF PUBMED:8276121</scope>
</reference>
<reference key="3">
    <citation type="journal article" date="2001" name="Proc. Natl. Acad. Sci. U.S.A.">
        <title>The complete genome of the crenarchaeon Sulfolobus solfataricus P2.</title>
        <authorList>
            <person name="She Q."/>
            <person name="Singh R.K."/>
            <person name="Confalonieri F."/>
            <person name="Zivanovic Y."/>
            <person name="Allard G."/>
            <person name="Awayez M.J."/>
            <person name="Chan-Weiher C.C.-Y."/>
            <person name="Clausen I.G."/>
            <person name="Curtis B.A."/>
            <person name="De Moors A."/>
            <person name="Erauso G."/>
            <person name="Fletcher C."/>
            <person name="Gordon P.M.K."/>
            <person name="Heikamp-de Jong I."/>
            <person name="Jeffries A.C."/>
            <person name="Kozera C.J."/>
            <person name="Medina N."/>
            <person name="Peng X."/>
            <person name="Thi-Ngoc H.P."/>
            <person name="Redder P."/>
            <person name="Schenk M.E."/>
            <person name="Theriault C."/>
            <person name="Tolstrup N."/>
            <person name="Charlebois R.L."/>
            <person name="Doolittle W.F."/>
            <person name="Duguet M."/>
            <person name="Gaasterland T."/>
            <person name="Garrett R.A."/>
            <person name="Ragan M.A."/>
            <person name="Sensen C.W."/>
            <person name="Van der Oost J."/>
        </authorList>
    </citation>
    <scope>NUCLEOTIDE SEQUENCE [LARGE SCALE GENOMIC DNA]</scope>
    <source>
        <strain>ATCC 35092 / DSM 1617 / JCM 11322 / P2</strain>
    </source>
</reference>
<reference key="4">
    <citation type="journal article" date="1990" name="J. Gen. Microbiol.">
        <title>Purification and properties of a thermostable fumarate hydratase from the archaeobacterium Sulfolobus solfataricus.</title>
        <authorList>
            <person name="Puchegger S."/>
            <person name="Redl B."/>
            <person name="Stoeffler G."/>
        </authorList>
    </citation>
    <scope>FUNCTION</scope>
    <scope>CATALYTIC ACTIVITY</scope>
    <scope>BIOPHYSICOCHEMICAL PROPERTIES</scope>
    <scope>SUBUNIT</scope>
    <source>
        <strain>ATCC 35091 / DSM 1616 / IFO 15331 / JCM 8930 / P1</strain>
    </source>
</reference>
<protein>
    <recommendedName>
        <fullName evidence="1 4">Fumarate hydratase class II</fullName>
        <shortName evidence="1 4">Fumarase C</shortName>
        <ecNumber evidence="1 2">4.2.1.2</ecNumber>
    </recommendedName>
    <alternativeName>
        <fullName evidence="1">Aerobic fumarase</fullName>
    </alternativeName>
    <alternativeName>
        <fullName evidence="1">Iron-independent fumarase</fullName>
    </alternativeName>
</protein>
<name>FUMC_SACS2</name>
<feature type="chain" id="PRO_0000161334" description="Fumarate hydratase class II">
    <location>
        <begin position="1"/>
        <end position="438"/>
    </location>
</feature>
<feature type="active site" description="Proton donor/acceptor" evidence="1">
    <location>
        <position position="160"/>
    </location>
</feature>
<feature type="active site" evidence="1">
    <location>
        <position position="291"/>
    </location>
</feature>
<feature type="binding site" evidence="1">
    <location>
        <begin position="76"/>
        <end position="78"/>
    </location>
    <ligand>
        <name>substrate</name>
    </ligand>
</feature>
<feature type="binding site" description="in site B" evidence="1">
    <location>
        <begin position="101"/>
        <end position="104"/>
    </location>
    <ligand>
        <name>substrate</name>
    </ligand>
</feature>
<feature type="binding site" evidence="1">
    <location>
        <begin position="111"/>
        <end position="113"/>
    </location>
    <ligand>
        <name>substrate</name>
    </ligand>
</feature>
<feature type="binding site" evidence="1">
    <location>
        <position position="159"/>
    </location>
    <ligand>
        <name>substrate</name>
    </ligand>
</feature>
<feature type="binding site" evidence="1">
    <location>
        <position position="292"/>
    </location>
    <ligand>
        <name>substrate</name>
    </ligand>
</feature>
<feature type="binding site" evidence="1">
    <location>
        <begin position="297"/>
        <end position="299"/>
    </location>
    <ligand>
        <name>substrate</name>
    </ligand>
</feature>
<feature type="site" description="Important for catalytic activity" evidence="1">
    <location>
        <position position="304"/>
    </location>
</feature>
<proteinExistence type="evidence at protein level"/>
<organism>
    <name type="scientific">Saccharolobus solfataricus (strain ATCC 35092 / DSM 1617 / JCM 11322 / P2)</name>
    <name type="common">Sulfolobus solfataricus</name>
    <dbReference type="NCBI Taxonomy" id="273057"/>
    <lineage>
        <taxon>Archaea</taxon>
        <taxon>Thermoproteota</taxon>
        <taxon>Thermoprotei</taxon>
        <taxon>Sulfolobales</taxon>
        <taxon>Sulfolobaceae</taxon>
        <taxon>Saccharolobus</taxon>
    </lineage>
</organism>
<sequence>MKYTDTAPKLFMNTGTKFPRRIIWSMGVLKKSCAKVNADLGLLDKKIADSIIKASDDLIDGKLDDKIVLDVFQTGSGTGLNMNVNEVIAEVASSYSNLKVHPNDHVNFGQSSNDTVPTAIRIAAVAEVTNRLLPALQQIISSLNKKAEEYKDVIKAGRTHLRDALPVTLGQELSAYADAFQHEHEQVMNILEYVKELPIGGTATGTGLNSHPEFQERVINEINRITGLGFKPANRFRAMRLLTDLLLLSGALRNIAVDLYRLGQDIRLMFSGPLTGLNEIDLPTQEEIAGSSIMPGKTNPVTVEATLLISAQVVGLDHANQFASMLGEFELSMGIPLVGYNIVTQVNFISEALEKMSRLVIDGMVANVEKMKRYAESSPSLITIVSPVIGYDKATEIGKKLNKGMSIREALRELGYSDNEINKILDLSKLVKPGFTAK</sequence>
<dbReference type="EC" id="4.2.1.2" evidence="1 2"/>
<dbReference type="EMBL" id="X75402">
    <property type="protein sequence ID" value="CAA53156.1"/>
    <property type="molecule type" value="Genomic_DNA"/>
</dbReference>
<dbReference type="EMBL" id="AE006641">
    <property type="protein sequence ID" value="AAK41339.1"/>
    <property type="status" value="ALT_INIT"/>
    <property type="molecule type" value="Genomic_DNA"/>
</dbReference>
<dbReference type="PIR" id="D90260">
    <property type="entry name" value="D90260"/>
</dbReference>
<dbReference type="PIR" id="S40448">
    <property type="entry name" value="S40448"/>
</dbReference>
<dbReference type="SMR" id="P39461"/>
<dbReference type="FunCoup" id="P39461">
    <property type="interactions" value="315"/>
</dbReference>
<dbReference type="STRING" id="273057.SSO1077"/>
<dbReference type="PaxDb" id="273057-SSO1077"/>
<dbReference type="EnsemblBacteria" id="AAK41339">
    <property type="protein sequence ID" value="AAK41339"/>
    <property type="gene ID" value="SSO1077"/>
</dbReference>
<dbReference type="KEGG" id="sso:SSO1077"/>
<dbReference type="PATRIC" id="fig|273057.12.peg.1077"/>
<dbReference type="eggNOG" id="arCOG01749">
    <property type="taxonomic scope" value="Archaea"/>
</dbReference>
<dbReference type="HOGENOM" id="CLU_021594_4_1_2"/>
<dbReference type="InParanoid" id="P39461"/>
<dbReference type="PhylomeDB" id="P39461"/>
<dbReference type="BRENDA" id="4.2.1.2">
    <property type="organism ID" value="6163"/>
</dbReference>
<dbReference type="UniPathway" id="UPA00223">
    <property type="reaction ID" value="UER01007"/>
</dbReference>
<dbReference type="Proteomes" id="UP000001974">
    <property type="component" value="Chromosome"/>
</dbReference>
<dbReference type="GO" id="GO:0005737">
    <property type="term" value="C:cytoplasm"/>
    <property type="evidence" value="ECO:0007669"/>
    <property type="project" value="UniProtKB-SubCell"/>
</dbReference>
<dbReference type="GO" id="GO:0004333">
    <property type="term" value="F:fumarate hydratase activity"/>
    <property type="evidence" value="ECO:0000314"/>
    <property type="project" value="UniProtKB"/>
</dbReference>
<dbReference type="GO" id="GO:0006106">
    <property type="term" value="P:fumarate metabolic process"/>
    <property type="evidence" value="ECO:0007669"/>
    <property type="project" value="InterPro"/>
</dbReference>
<dbReference type="GO" id="GO:0006099">
    <property type="term" value="P:tricarboxylic acid cycle"/>
    <property type="evidence" value="ECO:0007669"/>
    <property type="project" value="UniProtKB-UniRule"/>
</dbReference>
<dbReference type="FunFam" id="1.20.200.10:FF:000001">
    <property type="entry name" value="Fumarate hydratase, mitochondrial"/>
    <property type="match status" value="1"/>
</dbReference>
<dbReference type="Gene3D" id="1.10.40.30">
    <property type="entry name" value="Fumarase/aspartase (C-terminal domain)"/>
    <property type="match status" value="1"/>
</dbReference>
<dbReference type="Gene3D" id="1.20.200.10">
    <property type="entry name" value="Fumarase/aspartase (Central domain)"/>
    <property type="match status" value="1"/>
</dbReference>
<dbReference type="Gene3D" id="1.10.275.10">
    <property type="entry name" value="Fumarase/aspartase (N-terminal domain)"/>
    <property type="match status" value="1"/>
</dbReference>
<dbReference type="HAMAP" id="MF_00743">
    <property type="entry name" value="FumaraseC"/>
    <property type="match status" value="1"/>
</dbReference>
<dbReference type="InterPro" id="IPR005677">
    <property type="entry name" value="Fum_hydII"/>
</dbReference>
<dbReference type="InterPro" id="IPR024083">
    <property type="entry name" value="Fumarase/histidase_N"/>
</dbReference>
<dbReference type="InterPro" id="IPR018951">
    <property type="entry name" value="Fumarase_C_C"/>
</dbReference>
<dbReference type="InterPro" id="IPR020557">
    <property type="entry name" value="Fumarate_lyase_CS"/>
</dbReference>
<dbReference type="InterPro" id="IPR000362">
    <property type="entry name" value="Fumarate_lyase_fam"/>
</dbReference>
<dbReference type="InterPro" id="IPR022761">
    <property type="entry name" value="Fumarate_lyase_N"/>
</dbReference>
<dbReference type="InterPro" id="IPR008948">
    <property type="entry name" value="L-Aspartase-like"/>
</dbReference>
<dbReference type="InterPro" id="IPR001611">
    <property type="entry name" value="Leu-rich_rpt"/>
</dbReference>
<dbReference type="PANTHER" id="PTHR11444">
    <property type="entry name" value="ASPARTATEAMMONIA/ARGININOSUCCINATE/ADENYLOSUCCINATE LYASE"/>
    <property type="match status" value="1"/>
</dbReference>
<dbReference type="PANTHER" id="PTHR11444:SF22">
    <property type="entry name" value="FUMARATE HYDRATASE CLASS II"/>
    <property type="match status" value="1"/>
</dbReference>
<dbReference type="Pfam" id="PF10415">
    <property type="entry name" value="FumaraseC_C"/>
    <property type="match status" value="1"/>
</dbReference>
<dbReference type="Pfam" id="PF00206">
    <property type="entry name" value="Lyase_1"/>
    <property type="match status" value="1"/>
</dbReference>
<dbReference type="PRINTS" id="PR00145">
    <property type="entry name" value="ARGSUCLYASE"/>
</dbReference>
<dbReference type="PRINTS" id="PR00149">
    <property type="entry name" value="FUMRATELYASE"/>
</dbReference>
<dbReference type="SUPFAM" id="SSF48557">
    <property type="entry name" value="L-aspartase-like"/>
    <property type="match status" value="1"/>
</dbReference>
<dbReference type="PROSITE" id="PS00163">
    <property type="entry name" value="FUMARATE_LYASES"/>
    <property type="match status" value="1"/>
</dbReference>
<dbReference type="PROSITE" id="PS51450">
    <property type="entry name" value="LRR"/>
    <property type="match status" value="1"/>
</dbReference>
<comment type="function">
    <text evidence="1 2 3">Involved in the TCA cycle. Catalyzes the stereospecific interconversion of fumarate to L-malate.</text>
</comment>
<comment type="catalytic activity">
    <reaction evidence="1 2">
        <text>(S)-malate = fumarate + H2O</text>
        <dbReference type="Rhea" id="RHEA:12460"/>
        <dbReference type="ChEBI" id="CHEBI:15377"/>
        <dbReference type="ChEBI" id="CHEBI:15589"/>
        <dbReference type="ChEBI" id="CHEBI:29806"/>
        <dbReference type="EC" id="4.2.1.2"/>
    </reaction>
</comment>
<comment type="biophysicochemical properties">
    <kinetics>
        <KM evidence="2">0.125 mM for malate (at pH 7.5 and at 70 degrees Celsius)</KM>
        <KM evidence="2">0.3 mM for malate (at pH 7.5 and at 70 degrees Celsius)</KM>
    </kinetics>
    <phDependence>
        <text evidence="2">Optimum pH is 8.0.</text>
    </phDependence>
    <temperatureDependence>
        <text evidence="2 3">Optimum temperature is 85 degrees Celsius. At 95 degrees Celsius, the enzyme activity is still 66% of maximum, whereas at 40 degrees Celsius the enzyme is almost inactive. Thermostable.</text>
    </temperatureDependence>
</comment>
<comment type="pathway">
    <text evidence="1 5">Carbohydrate metabolism; tricarboxylic acid cycle; (S)-malate from fumarate: step 1/1.</text>
</comment>
<comment type="subunit">
    <text evidence="1 2">Homotetramer.</text>
</comment>
<comment type="subcellular location">
    <subcellularLocation>
        <location evidence="1 5">Cytoplasm</location>
    </subcellularLocation>
</comment>
<comment type="miscellaneous">
    <text evidence="1">There are 2 substrate-binding sites: the catalytic A site, and the non-catalytic B site that may play a role in the transfer of substrate or product between the active site and the solvent. Alternatively, the B site may bind allosteric effectors.</text>
</comment>
<comment type="similarity">
    <text evidence="1 5">Belongs to the class-II fumarase/aspartase family. Fumarase subfamily.</text>
</comment>
<comment type="sequence caution" evidence="5">
    <conflict type="erroneous initiation">
        <sequence resource="EMBL-CDS" id="AAK41339"/>
    </conflict>
    <text>Extended N-terminus.</text>
</comment>
<keyword id="KW-0963">Cytoplasm</keyword>
<keyword id="KW-0903">Direct protein sequencing</keyword>
<keyword id="KW-0456">Lyase</keyword>
<keyword id="KW-1185">Reference proteome</keyword>
<keyword id="KW-0816">Tricarboxylic acid cycle</keyword>